<sequence length="434" mass="47830">MQVSVEATQGLERRLTISVPAEQIEKLVKDSLQREAKRARIPGFRPGKVPITVINKRYGAAIRQDIMGEVMQRNFIEAIIAEKLNPAGAPTFVPGSTDGEKFEFIATFEIYPEVELKGLDAIEVEQPKAEVTDADVDTMIETLRKQHATFAAVEREAADGDKVKMNFVGSVDGEEFEGGKADDFELQLGSGRMIPGFETGILGHKAGEEFVIDVNFPEEYHAENLKGKAAKFAITLTEVQAANLPEVNDEFAALFGISEGGLEALKAEIRKNMNRELEQALKANVKEQVINGLLANNDITLPKALIDGEVNVLRQQAMQRFGNQTANMPELPAELFTEQAARRVKIGLLLGEVIKTNELKAEDERVQGLIASMASAYEDPSEVVAYYNSNKELMQNMRNVALEEQAVEALLKSAKVTEKEVAFEEFMNKATGRA</sequence>
<keyword id="KW-0131">Cell cycle</keyword>
<keyword id="KW-0132">Cell division</keyword>
<keyword id="KW-0143">Chaperone</keyword>
<keyword id="KW-0963">Cytoplasm</keyword>
<keyword id="KW-0413">Isomerase</keyword>
<keyword id="KW-0697">Rotamase</keyword>
<proteinExistence type="inferred from homology"/>
<protein>
    <recommendedName>
        <fullName evidence="1">Trigger factor</fullName>
        <shortName evidence="1">TF</shortName>
        <ecNumber evidence="1">5.2.1.8</ecNumber>
    </recommendedName>
    <alternativeName>
        <fullName evidence="1">PPIase</fullName>
    </alternativeName>
</protein>
<feature type="chain" id="PRO_1000022753" description="Trigger factor">
    <location>
        <begin position="1"/>
        <end position="434"/>
    </location>
</feature>
<feature type="domain" description="PPIase FKBP-type" evidence="1">
    <location>
        <begin position="160"/>
        <end position="245"/>
    </location>
</feature>
<reference key="1">
    <citation type="submission" date="2007-07" db="EMBL/GenBank/DDBJ databases">
        <title>Complete sequence of chromosome of Shewanella baltica OS185.</title>
        <authorList>
            <consortium name="US DOE Joint Genome Institute"/>
            <person name="Copeland A."/>
            <person name="Lucas S."/>
            <person name="Lapidus A."/>
            <person name="Barry K."/>
            <person name="Glavina del Rio T."/>
            <person name="Dalin E."/>
            <person name="Tice H."/>
            <person name="Pitluck S."/>
            <person name="Sims D."/>
            <person name="Brettin T."/>
            <person name="Bruce D."/>
            <person name="Detter J.C."/>
            <person name="Han C."/>
            <person name="Schmutz J."/>
            <person name="Larimer F."/>
            <person name="Land M."/>
            <person name="Hauser L."/>
            <person name="Kyrpides N."/>
            <person name="Mikhailova N."/>
            <person name="Brettar I."/>
            <person name="Rodrigues J."/>
            <person name="Konstantinidis K."/>
            <person name="Tiedje J."/>
            <person name="Richardson P."/>
        </authorList>
    </citation>
    <scope>NUCLEOTIDE SEQUENCE [LARGE SCALE GENOMIC DNA]</scope>
    <source>
        <strain>OS185</strain>
    </source>
</reference>
<evidence type="ECO:0000255" key="1">
    <source>
        <dbReference type="HAMAP-Rule" id="MF_00303"/>
    </source>
</evidence>
<accession>A6WLQ0</accession>
<gene>
    <name evidence="1" type="primary">tig</name>
    <name type="ordered locus">Shew185_1592</name>
</gene>
<name>TIG_SHEB8</name>
<organism>
    <name type="scientific">Shewanella baltica (strain OS185)</name>
    <dbReference type="NCBI Taxonomy" id="402882"/>
    <lineage>
        <taxon>Bacteria</taxon>
        <taxon>Pseudomonadati</taxon>
        <taxon>Pseudomonadota</taxon>
        <taxon>Gammaproteobacteria</taxon>
        <taxon>Alteromonadales</taxon>
        <taxon>Shewanellaceae</taxon>
        <taxon>Shewanella</taxon>
    </lineage>
</organism>
<comment type="function">
    <text evidence="1">Involved in protein export. Acts as a chaperone by maintaining the newly synthesized protein in an open conformation. Functions as a peptidyl-prolyl cis-trans isomerase.</text>
</comment>
<comment type="catalytic activity">
    <reaction evidence="1">
        <text>[protein]-peptidylproline (omega=180) = [protein]-peptidylproline (omega=0)</text>
        <dbReference type="Rhea" id="RHEA:16237"/>
        <dbReference type="Rhea" id="RHEA-COMP:10747"/>
        <dbReference type="Rhea" id="RHEA-COMP:10748"/>
        <dbReference type="ChEBI" id="CHEBI:83833"/>
        <dbReference type="ChEBI" id="CHEBI:83834"/>
        <dbReference type="EC" id="5.2.1.8"/>
    </reaction>
</comment>
<comment type="subcellular location">
    <subcellularLocation>
        <location>Cytoplasm</location>
    </subcellularLocation>
    <text evidence="1">About half TF is bound to the ribosome near the polypeptide exit tunnel while the other half is free in the cytoplasm.</text>
</comment>
<comment type="domain">
    <text evidence="1">Consists of 3 domains; the N-terminus binds the ribosome, the middle domain has PPIase activity, while the C-terminus has intrinsic chaperone activity on its own.</text>
</comment>
<comment type="similarity">
    <text evidence="1">Belongs to the FKBP-type PPIase family. Tig subfamily.</text>
</comment>
<dbReference type="EC" id="5.2.1.8" evidence="1"/>
<dbReference type="EMBL" id="CP000753">
    <property type="protein sequence ID" value="ABS07739.1"/>
    <property type="molecule type" value="Genomic_DNA"/>
</dbReference>
<dbReference type="RefSeq" id="WP_012088815.1">
    <property type="nucleotide sequence ID" value="NC_009665.1"/>
</dbReference>
<dbReference type="SMR" id="A6WLQ0"/>
<dbReference type="KEGG" id="sbm:Shew185_1592"/>
<dbReference type="HOGENOM" id="CLU_033058_2_0_6"/>
<dbReference type="GO" id="GO:0005737">
    <property type="term" value="C:cytoplasm"/>
    <property type="evidence" value="ECO:0007669"/>
    <property type="project" value="UniProtKB-SubCell"/>
</dbReference>
<dbReference type="GO" id="GO:0003755">
    <property type="term" value="F:peptidyl-prolyl cis-trans isomerase activity"/>
    <property type="evidence" value="ECO:0007669"/>
    <property type="project" value="UniProtKB-UniRule"/>
</dbReference>
<dbReference type="GO" id="GO:0044183">
    <property type="term" value="F:protein folding chaperone"/>
    <property type="evidence" value="ECO:0007669"/>
    <property type="project" value="TreeGrafter"/>
</dbReference>
<dbReference type="GO" id="GO:0043022">
    <property type="term" value="F:ribosome binding"/>
    <property type="evidence" value="ECO:0007669"/>
    <property type="project" value="TreeGrafter"/>
</dbReference>
<dbReference type="GO" id="GO:0051083">
    <property type="term" value="P:'de novo' cotranslational protein folding"/>
    <property type="evidence" value="ECO:0007669"/>
    <property type="project" value="TreeGrafter"/>
</dbReference>
<dbReference type="GO" id="GO:0051301">
    <property type="term" value="P:cell division"/>
    <property type="evidence" value="ECO:0007669"/>
    <property type="project" value="UniProtKB-KW"/>
</dbReference>
<dbReference type="GO" id="GO:0061077">
    <property type="term" value="P:chaperone-mediated protein folding"/>
    <property type="evidence" value="ECO:0007669"/>
    <property type="project" value="TreeGrafter"/>
</dbReference>
<dbReference type="GO" id="GO:0015031">
    <property type="term" value="P:protein transport"/>
    <property type="evidence" value="ECO:0007669"/>
    <property type="project" value="UniProtKB-UniRule"/>
</dbReference>
<dbReference type="GO" id="GO:0043335">
    <property type="term" value="P:protein unfolding"/>
    <property type="evidence" value="ECO:0007669"/>
    <property type="project" value="TreeGrafter"/>
</dbReference>
<dbReference type="FunFam" id="3.10.50.40:FF:000001">
    <property type="entry name" value="Trigger factor"/>
    <property type="match status" value="1"/>
</dbReference>
<dbReference type="FunFam" id="3.30.70.1050:FF:000001">
    <property type="entry name" value="Trigger factor"/>
    <property type="match status" value="1"/>
</dbReference>
<dbReference type="Gene3D" id="3.10.50.40">
    <property type="match status" value="1"/>
</dbReference>
<dbReference type="Gene3D" id="3.30.70.1050">
    <property type="entry name" value="Trigger factor ribosome-binding domain"/>
    <property type="match status" value="1"/>
</dbReference>
<dbReference type="Gene3D" id="1.10.3120.10">
    <property type="entry name" value="Trigger factor, C-terminal domain"/>
    <property type="match status" value="1"/>
</dbReference>
<dbReference type="HAMAP" id="MF_00303">
    <property type="entry name" value="Trigger_factor_Tig"/>
    <property type="match status" value="1"/>
</dbReference>
<dbReference type="InterPro" id="IPR046357">
    <property type="entry name" value="PPIase_dom_sf"/>
</dbReference>
<dbReference type="InterPro" id="IPR001179">
    <property type="entry name" value="PPIase_FKBP_dom"/>
</dbReference>
<dbReference type="InterPro" id="IPR005215">
    <property type="entry name" value="Trig_fac"/>
</dbReference>
<dbReference type="InterPro" id="IPR008880">
    <property type="entry name" value="Trigger_fac_C"/>
</dbReference>
<dbReference type="InterPro" id="IPR037041">
    <property type="entry name" value="Trigger_fac_C_sf"/>
</dbReference>
<dbReference type="InterPro" id="IPR008881">
    <property type="entry name" value="Trigger_fac_ribosome-bd_bac"/>
</dbReference>
<dbReference type="InterPro" id="IPR036611">
    <property type="entry name" value="Trigger_fac_ribosome-bd_sf"/>
</dbReference>
<dbReference type="InterPro" id="IPR027304">
    <property type="entry name" value="Trigger_fact/SurA_dom_sf"/>
</dbReference>
<dbReference type="NCBIfam" id="TIGR00115">
    <property type="entry name" value="tig"/>
    <property type="match status" value="1"/>
</dbReference>
<dbReference type="PANTHER" id="PTHR30560">
    <property type="entry name" value="TRIGGER FACTOR CHAPERONE AND PEPTIDYL-PROLYL CIS/TRANS ISOMERASE"/>
    <property type="match status" value="1"/>
</dbReference>
<dbReference type="PANTHER" id="PTHR30560:SF3">
    <property type="entry name" value="TRIGGER FACTOR-LIKE PROTEIN TIG, CHLOROPLASTIC"/>
    <property type="match status" value="1"/>
</dbReference>
<dbReference type="Pfam" id="PF00254">
    <property type="entry name" value="FKBP_C"/>
    <property type="match status" value="1"/>
</dbReference>
<dbReference type="Pfam" id="PF05698">
    <property type="entry name" value="Trigger_C"/>
    <property type="match status" value="1"/>
</dbReference>
<dbReference type="Pfam" id="PF05697">
    <property type="entry name" value="Trigger_N"/>
    <property type="match status" value="1"/>
</dbReference>
<dbReference type="PIRSF" id="PIRSF003095">
    <property type="entry name" value="Trigger_factor"/>
    <property type="match status" value="1"/>
</dbReference>
<dbReference type="SUPFAM" id="SSF54534">
    <property type="entry name" value="FKBP-like"/>
    <property type="match status" value="1"/>
</dbReference>
<dbReference type="SUPFAM" id="SSF109998">
    <property type="entry name" value="Triger factor/SurA peptide-binding domain-like"/>
    <property type="match status" value="1"/>
</dbReference>
<dbReference type="SUPFAM" id="SSF102735">
    <property type="entry name" value="Trigger factor ribosome-binding domain"/>
    <property type="match status" value="1"/>
</dbReference>
<dbReference type="PROSITE" id="PS50059">
    <property type="entry name" value="FKBP_PPIASE"/>
    <property type="match status" value="1"/>
</dbReference>